<comment type="function">
    <text evidence="1">Part of the ABC transporter complex PotABCD involved in spermidine/putrescine import. Responsible for energy coupling to the transport system.</text>
</comment>
<comment type="catalytic activity">
    <reaction evidence="1">
        <text>ATP + H2O + polyamine-[polyamine-binding protein]Side 1 = ADP + phosphate + polyamineSide 2 + [polyamine-binding protein]Side 1.</text>
        <dbReference type="EC" id="7.6.2.11"/>
    </reaction>
</comment>
<comment type="subunit">
    <text evidence="1">The complex is composed of two ATP-binding proteins (PotA), two transmembrane proteins (PotB and PotC) and a solute-binding protein (PotD).</text>
</comment>
<comment type="subcellular location">
    <subcellularLocation>
        <location evidence="1">Cell membrane</location>
        <topology evidence="1">Peripheral membrane protein</topology>
    </subcellularLocation>
</comment>
<comment type="similarity">
    <text evidence="1">Belongs to the ABC transporter superfamily. Spermidine/putrescine importer (TC 3.A.1.11.1) family.</text>
</comment>
<comment type="sequence caution" evidence="2">
    <conflict type="erroneous initiation">
        <sequence resource="EMBL-CDS" id="AAT03603"/>
    </conflict>
</comment>
<gene>
    <name evidence="1" type="primary">potA</name>
    <name type="ordered locus">LMOf2365_0823</name>
</gene>
<dbReference type="EC" id="7.6.2.11" evidence="1"/>
<dbReference type="EMBL" id="AE017262">
    <property type="protein sequence ID" value="AAT03603.1"/>
    <property type="status" value="ALT_INIT"/>
    <property type="molecule type" value="Genomic_DNA"/>
</dbReference>
<dbReference type="SMR" id="Q722B1"/>
<dbReference type="KEGG" id="lmf:LMOf2365_0823"/>
<dbReference type="HOGENOM" id="CLU_000604_1_1_9"/>
<dbReference type="GO" id="GO:0043190">
    <property type="term" value="C:ATP-binding cassette (ABC) transporter complex"/>
    <property type="evidence" value="ECO:0007669"/>
    <property type="project" value="InterPro"/>
</dbReference>
<dbReference type="GO" id="GO:0015594">
    <property type="term" value="F:ABC-type putrescine transporter activity"/>
    <property type="evidence" value="ECO:0007669"/>
    <property type="project" value="InterPro"/>
</dbReference>
<dbReference type="GO" id="GO:0005524">
    <property type="term" value="F:ATP binding"/>
    <property type="evidence" value="ECO:0007669"/>
    <property type="project" value="UniProtKB-KW"/>
</dbReference>
<dbReference type="GO" id="GO:0016887">
    <property type="term" value="F:ATP hydrolysis activity"/>
    <property type="evidence" value="ECO:0007669"/>
    <property type="project" value="InterPro"/>
</dbReference>
<dbReference type="CDD" id="cd03300">
    <property type="entry name" value="ABC_PotA_N"/>
    <property type="match status" value="1"/>
</dbReference>
<dbReference type="FunFam" id="3.40.50.300:FF:000042">
    <property type="entry name" value="Maltose/maltodextrin ABC transporter, ATP-binding protein"/>
    <property type="match status" value="1"/>
</dbReference>
<dbReference type="Gene3D" id="2.40.50.100">
    <property type="match status" value="1"/>
</dbReference>
<dbReference type="Gene3D" id="2.40.50.140">
    <property type="entry name" value="Nucleic acid-binding proteins"/>
    <property type="match status" value="1"/>
</dbReference>
<dbReference type="Gene3D" id="3.40.50.300">
    <property type="entry name" value="P-loop containing nucleotide triphosphate hydrolases"/>
    <property type="match status" value="1"/>
</dbReference>
<dbReference type="InterPro" id="IPR003593">
    <property type="entry name" value="AAA+_ATPase"/>
</dbReference>
<dbReference type="InterPro" id="IPR050093">
    <property type="entry name" value="ABC_SmlMolc_Importer"/>
</dbReference>
<dbReference type="InterPro" id="IPR003439">
    <property type="entry name" value="ABC_transporter-like_ATP-bd"/>
</dbReference>
<dbReference type="InterPro" id="IPR017871">
    <property type="entry name" value="ABC_transporter-like_CS"/>
</dbReference>
<dbReference type="InterPro" id="IPR008995">
    <property type="entry name" value="Mo/tungstate-bd_C_term_dom"/>
</dbReference>
<dbReference type="InterPro" id="IPR012340">
    <property type="entry name" value="NA-bd_OB-fold"/>
</dbReference>
<dbReference type="InterPro" id="IPR027417">
    <property type="entry name" value="P-loop_NTPase"/>
</dbReference>
<dbReference type="InterPro" id="IPR017879">
    <property type="entry name" value="PotA_ATP-bd"/>
</dbReference>
<dbReference type="InterPro" id="IPR013611">
    <property type="entry name" value="Transp-assoc_OB_typ2"/>
</dbReference>
<dbReference type="PANTHER" id="PTHR42781">
    <property type="entry name" value="SPERMIDINE/PUTRESCINE IMPORT ATP-BINDING PROTEIN POTA"/>
    <property type="match status" value="1"/>
</dbReference>
<dbReference type="PANTHER" id="PTHR42781:SF4">
    <property type="entry name" value="SPERMIDINE_PUTRESCINE IMPORT ATP-BINDING PROTEIN POTA"/>
    <property type="match status" value="1"/>
</dbReference>
<dbReference type="Pfam" id="PF00005">
    <property type="entry name" value="ABC_tran"/>
    <property type="match status" value="1"/>
</dbReference>
<dbReference type="Pfam" id="PF08402">
    <property type="entry name" value="TOBE_2"/>
    <property type="match status" value="1"/>
</dbReference>
<dbReference type="SMART" id="SM00382">
    <property type="entry name" value="AAA"/>
    <property type="match status" value="1"/>
</dbReference>
<dbReference type="SUPFAM" id="SSF50331">
    <property type="entry name" value="MOP-like"/>
    <property type="match status" value="1"/>
</dbReference>
<dbReference type="SUPFAM" id="SSF52540">
    <property type="entry name" value="P-loop containing nucleoside triphosphate hydrolases"/>
    <property type="match status" value="1"/>
</dbReference>
<dbReference type="PROSITE" id="PS00211">
    <property type="entry name" value="ABC_TRANSPORTER_1"/>
    <property type="match status" value="1"/>
</dbReference>
<dbReference type="PROSITE" id="PS50893">
    <property type="entry name" value="ABC_TRANSPORTER_2"/>
    <property type="match status" value="1"/>
</dbReference>
<dbReference type="PROSITE" id="PS51305">
    <property type="entry name" value="POTA"/>
    <property type="match status" value="1"/>
</dbReference>
<sequence length="366" mass="41928">MIVTETIIRFENVTKQFDNDPPVLDNVSFEIEKGKFYTLLGPSGCGKTTILRLIAGFLEASEGQIYLGDKVINQIPANKRPVNTVFQDYALFPHLNVYENVAFGLRIKKLKKDAIDEKVKEALRFVNLKGYEKREISEMSGGQRQRVAIARAIVNEPEVILLDEPLSALDLKLRTEMQYELRDLQKRLGITFIFVTHDQEEALAMSDEIFVLNKGEIQQSGTPIDIYDEPINKFVADFIGESNIVNGKMIQDFEVEFVERRFECVDQGFRPNEVVEVVIRPEDLEITSAEKGQLQVTVDWMLFRGVHYEVGCIDTDGNEWLVHTTRKVRVGDKIGLAFEPEAIHVMRLGETEEEFDKRLDSYDEVQ</sequence>
<organism>
    <name type="scientific">Listeria monocytogenes serotype 4b (strain F2365)</name>
    <dbReference type="NCBI Taxonomy" id="265669"/>
    <lineage>
        <taxon>Bacteria</taxon>
        <taxon>Bacillati</taxon>
        <taxon>Bacillota</taxon>
        <taxon>Bacilli</taxon>
        <taxon>Bacillales</taxon>
        <taxon>Listeriaceae</taxon>
        <taxon>Listeria</taxon>
    </lineage>
</organism>
<reference key="1">
    <citation type="journal article" date="2004" name="Nucleic Acids Res.">
        <title>Whole genome comparisons of serotype 4b and 1/2a strains of the food-borne pathogen Listeria monocytogenes reveal new insights into the core genome components of this species.</title>
        <authorList>
            <person name="Nelson K.E."/>
            <person name="Fouts D.E."/>
            <person name="Mongodin E.F."/>
            <person name="Ravel J."/>
            <person name="DeBoy R.T."/>
            <person name="Kolonay J.F."/>
            <person name="Rasko D.A."/>
            <person name="Angiuoli S.V."/>
            <person name="Gill S.R."/>
            <person name="Paulsen I.T."/>
            <person name="Peterson J.D."/>
            <person name="White O."/>
            <person name="Nelson W.C."/>
            <person name="Nierman W.C."/>
            <person name="Beanan M.J."/>
            <person name="Brinkac L.M."/>
            <person name="Daugherty S.C."/>
            <person name="Dodson R.J."/>
            <person name="Durkin A.S."/>
            <person name="Madupu R."/>
            <person name="Haft D.H."/>
            <person name="Selengut J."/>
            <person name="Van Aken S.E."/>
            <person name="Khouri H.M."/>
            <person name="Fedorova N."/>
            <person name="Forberger H.A."/>
            <person name="Tran B."/>
            <person name="Kathariou S."/>
            <person name="Wonderling L.D."/>
            <person name="Uhlich G.A."/>
            <person name="Bayles D.O."/>
            <person name="Luchansky J.B."/>
            <person name="Fraser C.M."/>
        </authorList>
    </citation>
    <scope>NUCLEOTIDE SEQUENCE [LARGE SCALE GENOMIC DNA]</scope>
    <source>
        <strain>F2365</strain>
    </source>
</reference>
<feature type="chain" id="PRO_0000286245" description="Spermidine/putrescine import ATP-binding protein PotA">
    <location>
        <begin position="1"/>
        <end position="366"/>
    </location>
</feature>
<feature type="domain" description="ABC transporter" evidence="1">
    <location>
        <begin position="8"/>
        <end position="239"/>
    </location>
</feature>
<feature type="binding site" evidence="1">
    <location>
        <begin position="41"/>
        <end position="48"/>
    </location>
    <ligand>
        <name>ATP</name>
        <dbReference type="ChEBI" id="CHEBI:30616"/>
    </ligand>
</feature>
<accession>Q722B1</accession>
<proteinExistence type="inferred from homology"/>
<name>POTA_LISMF</name>
<keyword id="KW-0067">ATP-binding</keyword>
<keyword id="KW-1003">Cell membrane</keyword>
<keyword id="KW-0472">Membrane</keyword>
<keyword id="KW-0547">Nucleotide-binding</keyword>
<keyword id="KW-1278">Translocase</keyword>
<keyword id="KW-0813">Transport</keyword>
<evidence type="ECO:0000255" key="1">
    <source>
        <dbReference type="HAMAP-Rule" id="MF_01726"/>
    </source>
</evidence>
<evidence type="ECO:0000305" key="2"/>
<protein>
    <recommendedName>
        <fullName evidence="1">Spermidine/putrescine import ATP-binding protein PotA</fullName>
        <ecNumber evidence="1">7.6.2.11</ecNumber>
    </recommendedName>
</protein>